<evidence type="ECO:0000255" key="1">
    <source>
        <dbReference type="HAMAP-Rule" id="MF_00008"/>
    </source>
</evidence>
<comment type="function">
    <text evidence="1">Catalyzes the reductive methylation of 2'-deoxyuridine-5'-monophosphate (dUMP) to 2'-deoxythymidine-5'-monophosphate (dTMP) while utilizing 5,10-methylenetetrahydrofolate (mTHF) as the methyl donor and reductant in the reaction, yielding dihydrofolate (DHF) as a by-product. This enzymatic reaction provides an intracellular de novo source of dTMP, an essential precursor for DNA biosynthesis.</text>
</comment>
<comment type="catalytic activity">
    <reaction evidence="1">
        <text>dUMP + (6R)-5,10-methylene-5,6,7,8-tetrahydrofolate = 7,8-dihydrofolate + dTMP</text>
        <dbReference type="Rhea" id="RHEA:12104"/>
        <dbReference type="ChEBI" id="CHEBI:15636"/>
        <dbReference type="ChEBI" id="CHEBI:57451"/>
        <dbReference type="ChEBI" id="CHEBI:63528"/>
        <dbReference type="ChEBI" id="CHEBI:246422"/>
        <dbReference type="EC" id="2.1.1.45"/>
    </reaction>
</comment>
<comment type="pathway">
    <text evidence="1">Pyrimidine metabolism; dTTP biosynthesis.</text>
</comment>
<comment type="subunit">
    <text evidence="1">Homodimer.</text>
</comment>
<comment type="subcellular location">
    <subcellularLocation>
        <location evidence="1">Cytoplasm</location>
    </subcellularLocation>
</comment>
<comment type="similarity">
    <text evidence="1">Belongs to the thymidylate synthase family. Bacterial-type ThyA subfamily.</text>
</comment>
<feature type="chain" id="PRO_1000073887" description="Thymidylate synthase">
    <location>
        <begin position="1"/>
        <end position="318"/>
    </location>
</feature>
<feature type="active site" description="Nucleophile" evidence="1">
    <location>
        <position position="201"/>
    </location>
</feature>
<feature type="binding site" description="in other chain" evidence="1">
    <location>
        <position position="26"/>
    </location>
    <ligand>
        <name>dUMP</name>
        <dbReference type="ChEBI" id="CHEBI:246422"/>
        <note>ligand shared between dimeric partners</note>
    </ligand>
</feature>
<feature type="binding site" evidence="1">
    <location>
        <begin position="181"/>
        <end position="182"/>
    </location>
    <ligand>
        <name>dUMP</name>
        <dbReference type="ChEBI" id="CHEBI:246422"/>
        <note>ligand shared between dimeric partners</note>
    </ligand>
</feature>
<feature type="binding site" description="in other chain" evidence="1">
    <location>
        <begin position="221"/>
        <end position="224"/>
    </location>
    <ligand>
        <name>dUMP</name>
        <dbReference type="ChEBI" id="CHEBI:246422"/>
        <note>ligand shared between dimeric partners</note>
    </ligand>
</feature>
<feature type="binding site" evidence="1">
    <location>
        <position position="224"/>
    </location>
    <ligand>
        <name>(6R)-5,10-methylene-5,6,7,8-tetrahydrofolate</name>
        <dbReference type="ChEBI" id="CHEBI:15636"/>
    </ligand>
</feature>
<feature type="binding site" description="in other chain" evidence="1">
    <location>
        <position position="232"/>
    </location>
    <ligand>
        <name>dUMP</name>
        <dbReference type="ChEBI" id="CHEBI:246422"/>
        <note>ligand shared between dimeric partners</note>
    </ligand>
</feature>
<feature type="binding site" description="in other chain" evidence="1">
    <location>
        <begin position="262"/>
        <end position="264"/>
    </location>
    <ligand>
        <name>dUMP</name>
        <dbReference type="ChEBI" id="CHEBI:246422"/>
        <note>ligand shared between dimeric partners</note>
    </ligand>
</feature>
<feature type="binding site" evidence="1">
    <location>
        <position position="317"/>
    </location>
    <ligand>
        <name>(6R)-5,10-methylene-5,6,7,8-tetrahydrofolate</name>
        <dbReference type="ChEBI" id="CHEBI:15636"/>
    </ligand>
</feature>
<proteinExistence type="inferred from homology"/>
<sequence length="318" mass="36825">MLNSFDAAYHSLCEEVLEIGNTRNDRTNTGTISKFGHQLRFDLSKGFPLLTTKKVSFKLVATELLWFIKGDTNIQYLLKYNNNIWNEWAFENYIKSDEYNGPDMTDFGHRALSDPEFNEQYKEQMKQFKQRILEDDTFAKQFGDLGNVYGKQWRDWVDKDGNHFDQLKTVIEQIKHNPDSRRHIVSAWNPTEIDTMALPPCHTMFQFYVQDGKLSCQLYQRSADIFLGVPFNIASYALLTHLIAKECGLEVGEFVHTFGDAHIYSNHIDAIQTQLARESFNPPTLKINSDKSIFDINYEDLEIVDYESHPAIKAPIAV</sequence>
<name>TYSY_STAA2</name>
<accession>A6U1P7</accession>
<gene>
    <name evidence="1" type="primary">thyA</name>
    <name type="ordered locus">SaurJH1_1516</name>
</gene>
<keyword id="KW-0963">Cytoplasm</keyword>
<keyword id="KW-0489">Methyltransferase</keyword>
<keyword id="KW-0545">Nucleotide biosynthesis</keyword>
<keyword id="KW-0808">Transferase</keyword>
<reference key="1">
    <citation type="submission" date="2007-06" db="EMBL/GenBank/DDBJ databases">
        <title>Complete sequence of chromosome of Staphylococcus aureus subsp. aureus JH1.</title>
        <authorList>
            <consortium name="US DOE Joint Genome Institute"/>
            <person name="Copeland A."/>
            <person name="Lucas S."/>
            <person name="Lapidus A."/>
            <person name="Barry K."/>
            <person name="Detter J.C."/>
            <person name="Glavina del Rio T."/>
            <person name="Hammon N."/>
            <person name="Israni S."/>
            <person name="Dalin E."/>
            <person name="Tice H."/>
            <person name="Pitluck S."/>
            <person name="Chain P."/>
            <person name="Malfatti S."/>
            <person name="Shin M."/>
            <person name="Vergez L."/>
            <person name="Schmutz J."/>
            <person name="Larimer F."/>
            <person name="Land M."/>
            <person name="Hauser L."/>
            <person name="Kyrpides N."/>
            <person name="Ivanova N."/>
            <person name="Tomasz A."/>
            <person name="Richardson P."/>
        </authorList>
    </citation>
    <scope>NUCLEOTIDE SEQUENCE [LARGE SCALE GENOMIC DNA]</scope>
    <source>
        <strain>JH1</strain>
    </source>
</reference>
<dbReference type="EC" id="2.1.1.45" evidence="1"/>
<dbReference type="EMBL" id="CP000736">
    <property type="protein sequence ID" value="ABR52365.1"/>
    <property type="molecule type" value="Genomic_DNA"/>
</dbReference>
<dbReference type="SMR" id="A6U1P7"/>
<dbReference type="KEGG" id="sah:SaurJH1_1516"/>
<dbReference type="HOGENOM" id="CLU_021669_0_2_9"/>
<dbReference type="UniPathway" id="UPA00575"/>
<dbReference type="GO" id="GO:0005829">
    <property type="term" value="C:cytosol"/>
    <property type="evidence" value="ECO:0007669"/>
    <property type="project" value="TreeGrafter"/>
</dbReference>
<dbReference type="GO" id="GO:0004799">
    <property type="term" value="F:thymidylate synthase activity"/>
    <property type="evidence" value="ECO:0007669"/>
    <property type="project" value="UniProtKB-UniRule"/>
</dbReference>
<dbReference type="GO" id="GO:0006231">
    <property type="term" value="P:dTMP biosynthetic process"/>
    <property type="evidence" value="ECO:0007669"/>
    <property type="project" value="UniProtKB-UniRule"/>
</dbReference>
<dbReference type="GO" id="GO:0006235">
    <property type="term" value="P:dTTP biosynthetic process"/>
    <property type="evidence" value="ECO:0007669"/>
    <property type="project" value="UniProtKB-UniRule"/>
</dbReference>
<dbReference type="GO" id="GO:0032259">
    <property type="term" value="P:methylation"/>
    <property type="evidence" value="ECO:0007669"/>
    <property type="project" value="UniProtKB-KW"/>
</dbReference>
<dbReference type="CDD" id="cd00351">
    <property type="entry name" value="TS_Pyrimidine_HMase"/>
    <property type="match status" value="1"/>
</dbReference>
<dbReference type="Gene3D" id="3.30.572.10">
    <property type="entry name" value="Thymidylate synthase/dCMP hydroxymethylase domain"/>
    <property type="match status" value="1"/>
</dbReference>
<dbReference type="HAMAP" id="MF_00008">
    <property type="entry name" value="Thymidy_synth_bact"/>
    <property type="match status" value="1"/>
</dbReference>
<dbReference type="InterPro" id="IPR045097">
    <property type="entry name" value="Thymidate_synth/dCMP_Mease"/>
</dbReference>
<dbReference type="InterPro" id="IPR023451">
    <property type="entry name" value="Thymidate_synth/dCMP_Mease_dom"/>
</dbReference>
<dbReference type="InterPro" id="IPR036926">
    <property type="entry name" value="Thymidate_synth/dCMP_Mease_sf"/>
</dbReference>
<dbReference type="InterPro" id="IPR000398">
    <property type="entry name" value="Thymidylate_synthase"/>
</dbReference>
<dbReference type="InterPro" id="IPR020940">
    <property type="entry name" value="Thymidylate_synthase_AS"/>
</dbReference>
<dbReference type="NCBIfam" id="NF002496">
    <property type="entry name" value="PRK01827.1-2"/>
    <property type="match status" value="1"/>
</dbReference>
<dbReference type="NCBIfam" id="TIGR03284">
    <property type="entry name" value="thym_sym"/>
    <property type="match status" value="1"/>
</dbReference>
<dbReference type="PANTHER" id="PTHR11548:SF9">
    <property type="entry name" value="THYMIDYLATE SYNTHASE"/>
    <property type="match status" value="1"/>
</dbReference>
<dbReference type="PANTHER" id="PTHR11548">
    <property type="entry name" value="THYMIDYLATE SYNTHASE 1"/>
    <property type="match status" value="1"/>
</dbReference>
<dbReference type="Pfam" id="PF00303">
    <property type="entry name" value="Thymidylat_synt"/>
    <property type="match status" value="1"/>
</dbReference>
<dbReference type="PRINTS" id="PR00108">
    <property type="entry name" value="THYMDSNTHASE"/>
</dbReference>
<dbReference type="SUPFAM" id="SSF55831">
    <property type="entry name" value="Thymidylate synthase/dCMP hydroxymethylase"/>
    <property type="match status" value="1"/>
</dbReference>
<dbReference type="PROSITE" id="PS00091">
    <property type="entry name" value="THYMIDYLATE_SYNTHASE"/>
    <property type="match status" value="1"/>
</dbReference>
<protein>
    <recommendedName>
        <fullName evidence="1">Thymidylate synthase</fullName>
        <shortName evidence="1">TS</shortName>
        <shortName evidence="1">TSase</shortName>
        <ecNumber evidence="1">2.1.1.45</ecNumber>
    </recommendedName>
</protein>
<organism>
    <name type="scientific">Staphylococcus aureus (strain JH1)</name>
    <dbReference type="NCBI Taxonomy" id="359787"/>
    <lineage>
        <taxon>Bacteria</taxon>
        <taxon>Bacillati</taxon>
        <taxon>Bacillota</taxon>
        <taxon>Bacilli</taxon>
        <taxon>Bacillales</taxon>
        <taxon>Staphylococcaceae</taxon>
        <taxon>Staphylococcus</taxon>
    </lineage>
</organism>